<keyword id="KW-0067">ATP-binding</keyword>
<keyword id="KW-0963">Cytoplasm</keyword>
<keyword id="KW-0418">Kinase</keyword>
<keyword id="KW-0547">Nucleotide-binding</keyword>
<keyword id="KW-0665">Pyrimidine biosynthesis</keyword>
<keyword id="KW-1185">Reference proteome</keyword>
<keyword id="KW-0808">Transferase</keyword>
<evidence type="ECO:0000255" key="1">
    <source>
        <dbReference type="HAMAP-Rule" id="MF_01220"/>
    </source>
</evidence>
<comment type="function">
    <text evidence="1">Catalyzes the reversible phosphorylation of UMP to UDP.</text>
</comment>
<comment type="catalytic activity">
    <reaction evidence="1">
        <text>UMP + ATP = UDP + ADP</text>
        <dbReference type="Rhea" id="RHEA:24400"/>
        <dbReference type="ChEBI" id="CHEBI:30616"/>
        <dbReference type="ChEBI" id="CHEBI:57865"/>
        <dbReference type="ChEBI" id="CHEBI:58223"/>
        <dbReference type="ChEBI" id="CHEBI:456216"/>
        <dbReference type="EC" id="2.7.4.22"/>
    </reaction>
</comment>
<comment type="activity regulation">
    <text evidence="1">Inhibited by UTP.</text>
</comment>
<comment type="pathway">
    <text evidence="1">Pyrimidine metabolism; CTP biosynthesis via de novo pathway; UDP from UMP (UMPK route): step 1/1.</text>
</comment>
<comment type="subunit">
    <text evidence="1">Homohexamer.</text>
</comment>
<comment type="subcellular location">
    <subcellularLocation>
        <location evidence="1">Cytoplasm</location>
    </subcellularLocation>
</comment>
<comment type="similarity">
    <text evidence="1">Belongs to the UMP kinase family.</text>
</comment>
<protein>
    <recommendedName>
        <fullName evidence="1">Uridylate kinase</fullName>
        <shortName evidence="1">UK</shortName>
        <ecNumber evidence="1">2.7.4.22</ecNumber>
    </recommendedName>
    <alternativeName>
        <fullName evidence="1">Uridine monophosphate kinase</fullName>
        <shortName evidence="1">UMP kinase</shortName>
        <shortName evidence="1">UMPK</shortName>
    </alternativeName>
</protein>
<proteinExistence type="inferred from homology"/>
<sequence>MTRVVISVGGSVLVPSLDAHRLKEWAEALINLTNAGIQIFAVVGGGGEARRYIEACRDIGLDEASSDEIGIQVTRINAALLIGALKEYAYPVVAESYREAKTAAVSGKIVVMGGVTPGQTTDAVAAVLAEEVGASMMINMTAIDGIYTADPKKDAKAKRHDILSPQGLIDLIMKEKMCAGSNMVIDLVAAKITERSGIPLVVIDGRDPALIEKALLKGEFAGTIVGNSAIRFPIV</sequence>
<dbReference type="EC" id="2.7.4.22" evidence="1"/>
<dbReference type="EMBL" id="CP000559">
    <property type="protein sequence ID" value="ABN07172.1"/>
    <property type="molecule type" value="Genomic_DNA"/>
</dbReference>
<dbReference type="RefSeq" id="WP_011833375.1">
    <property type="nucleotide sequence ID" value="NC_008942.1"/>
</dbReference>
<dbReference type="SMR" id="A2SS66"/>
<dbReference type="STRING" id="410358.Mlab_1003"/>
<dbReference type="GeneID" id="4794378"/>
<dbReference type="KEGG" id="mla:Mlab_1003"/>
<dbReference type="eggNOG" id="arCOG00858">
    <property type="taxonomic scope" value="Archaea"/>
</dbReference>
<dbReference type="HOGENOM" id="CLU_079546_0_0_2"/>
<dbReference type="OrthoDB" id="372251at2157"/>
<dbReference type="UniPathway" id="UPA00159">
    <property type="reaction ID" value="UER00275"/>
</dbReference>
<dbReference type="Proteomes" id="UP000000365">
    <property type="component" value="Chromosome"/>
</dbReference>
<dbReference type="GO" id="GO:0005737">
    <property type="term" value="C:cytoplasm"/>
    <property type="evidence" value="ECO:0007669"/>
    <property type="project" value="UniProtKB-SubCell"/>
</dbReference>
<dbReference type="GO" id="GO:0005524">
    <property type="term" value="F:ATP binding"/>
    <property type="evidence" value="ECO:0007669"/>
    <property type="project" value="UniProtKB-KW"/>
</dbReference>
<dbReference type="GO" id="GO:0033862">
    <property type="term" value="F:UMP kinase activity"/>
    <property type="evidence" value="ECO:0007669"/>
    <property type="project" value="UniProtKB-EC"/>
</dbReference>
<dbReference type="GO" id="GO:0044210">
    <property type="term" value="P:'de novo' CTP biosynthetic process"/>
    <property type="evidence" value="ECO:0007669"/>
    <property type="project" value="UniProtKB-UniRule"/>
</dbReference>
<dbReference type="GO" id="GO:0006225">
    <property type="term" value="P:UDP biosynthetic process"/>
    <property type="evidence" value="ECO:0007669"/>
    <property type="project" value="TreeGrafter"/>
</dbReference>
<dbReference type="CDD" id="cd04253">
    <property type="entry name" value="AAK_UMPK-PyrH-Pf"/>
    <property type="match status" value="1"/>
</dbReference>
<dbReference type="Gene3D" id="3.40.1160.10">
    <property type="entry name" value="Acetylglutamate kinase-like"/>
    <property type="match status" value="1"/>
</dbReference>
<dbReference type="HAMAP" id="MF_01220_A">
    <property type="entry name" value="PyrH_A"/>
    <property type="match status" value="1"/>
</dbReference>
<dbReference type="InterPro" id="IPR036393">
    <property type="entry name" value="AceGlu_kinase-like_sf"/>
</dbReference>
<dbReference type="InterPro" id="IPR001048">
    <property type="entry name" value="Asp/Glu/Uridylate_kinase"/>
</dbReference>
<dbReference type="InterPro" id="IPR011817">
    <property type="entry name" value="Uridylate_kinase"/>
</dbReference>
<dbReference type="InterPro" id="IPR011818">
    <property type="entry name" value="Uridylate_kinase_arch/spir"/>
</dbReference>
<dbReference type="NCBIfam" id="TIGR02076">
    <property type="entry name" value="pyrH_arch"/>
    <property type="match status" value="1"/>
</dbReference>
<dbReference type="PANTHER" id="PTHR42833">
    <property type="entry name" value="URIDYLATE KINASE"/>
    <property type="match status" value="1"/>
</dbReference>
<dbReference type="PANTHER" id="PTHR42833:SF4">
    <property type="entry name" value="URIDYLATE KINASE PUMPKIN, CHLOROPLASTIC"/>
    <property type="match status" value="1"/>
</dbReference>
<dbReference type="Pfam" id="PF00696">
    <property type="entry name" value="AA_kinase"/>
    <property type="match status" value="1"/>
</dbReference>
<dbReference type="PIRSF" id="PIRSF005650">
    <property type="entry name" value="Uridylate_kin"/>
    <property type="match status" value="1"/>
</dbReference>
<dbReference type="SUPFAM" id="SSF53633">
    <property type="entry name" value="Carbamate kinase-like"/>
    <property type="match status" value="1"/>
</dbReference>
<reference key="1">
    <citation type="journal article" date="2009" name="Stand. Genomic Sci.">
        <title>Complete genome sequence of Methanocorpusculum labreanum type strain Z.</title>
        <authorList>
            <person name="Anderson I.J."/>
            <person name="Sieprawska-Lupa M."/>
            <person name="Goltsman E."/>
            <person name="Lapidus A."/>
            <person name="Copeland A."/>
            <person name="Glavina Del Rio T."/>
            <person name="Tice H."/>
            <person name="Dalin E."/>
            <person name="Barry K."/>
            <person name="Pitluck S."/>
            <person name="Hauser L."/>
            <person name="Land M."/>
            <person name="Lucas S."/>
            <person name="Richardson P."/>
            <person name="Whitman W.B."/>
            <person name="Kyrpides N.C."/>
        </authorList>
    </citation>
    <scope>NUCLEOTIDE SEQUENCE [LARGE SCALE GENOMIC DNA]</scope>
    <source>
        <strain>ATCC 43576 / DSM 4855 / Z</strain>
    </source>
</reference>
<feature type="chain" id="PRO_0000323990" description="Uridylate kinase">
    <location>
        <begin position="1"/>
        <end position="235"/>
    </location>
</feature>
<feature type="binding site" evidence="1">
    <location>
        <begin position="10"/>
        <end position="11"/>
    </location>
    <ligand>
        <name>ATP</name>
        <dbReference type="ChEBI" id="CHEBI:30616"/>
    </ligand>
</feature>
<feature type="binding site" evidence="1">
    <location>
        <position position="45"/>
    </location>
    <ligand>
        <name>UMP</name>
        <dbReference type="ChEBI" id="CHEBI:57865"/>
    </ligand>
</feature>
<feature type="binding site" evidence="1">
    <location>
        <position position="46"/>
    </location>
    <ligand>
        <name>ATP</name>
        <dbReference type="ChEBI" id="CHEBI:30616"/>
    </ligand>
</feature>
<feature type="binding site" evidence="1">
    <location>
        <position position="50"/>
    </location>
    <ligand>
        <name>ATP</name>
        <dbReference type="ChEBI" id="CHEBI:30616"/>
    </ligand>
</feature>
<feature type="binding site" evidence="1">
    <location>
        <position position="67"/>
    </location>
    <ligand>
        <name>UMP</name>
        <dbReference type="ChEBI" id="CHEBI:57865"/>
    </ligand>
</feature>
<feature type="binding site" evidence="1">
    <location>
        <begin position="115"/>
        <end position="121"/>
    </location>
    <ligand>
        <name>UMP</name>
        <dbReference type="ChEBI" id="CHEBI:57865"/>
    </ligand>
</feature>
<feature type="binding site" evidence="1">
    <location>
        <position position="141"/>
    </location>
    <ligand>
        <name>ATP</name>
        <dbReference type="ChEBI" id="CHEBI:30616"/>
    </ligand>
</feature>
<feature type="binding site" evidence="1">
    <location>
        <position position="147"/>
    </location>
    <ligand>
        <name>ATP</name>
        <dbReference type="ChEBI" id="CHEBI:30616"/>
    </ligand>
</feature>
<feature type="binding site" evidence="1">
    <location>
        <position position="150"/>
    </location>
    <ligand>
        <name>ATP</name>
        <dbReference type="ChEBI" id="CHEBI:30616"/>
    </ligand>
</feature>
<accession>A2SS66</accession>
<name>PYRH_METLZ</name>
<organism>
    <name type="scientific">Methanocorpusculum labreanum (strain ATCC 43576 / DSM 4855 / Z)</name>
    <dbReference type="NCBI Taxonomy" id="410358"/>
    <lineage>
        <taxon>Archaea</taxon>
        <taxon>Methanobacteriati</taxon>
        <taxon>Methanobacteriota</taxon>
        <taxon>Stenosarchaea group</taxon>
        <taxon>Methanomicrobia</taxon>
        <taxon>Methanomicrobiales</taxon>
        <taxon>Methanocorpusculaceae</taxon>
        <taxon>Methanocorpusculum</taxon>
    </lineage>
</organism>
<gene>
    <name evidence="1" type="primary">pyrH</name>
    <name type="ordered locus">Mlab_1003</name>
</gene>